<comment type="similarity">
    <text evidence="3">Belongs to the TRAFAC class TrmE-Era-EngA-EngB-Septin-like GTPase superfamily. AIG1/Toc34/Toc159-like paraseptin GTPase family. IAN subfamily.</text>
</comment>
<reference key="1">
    <citation type="journal article" date="2009" name="PLoS Biol.">
        <title>Lineage-specific biology revealed by a finished genome assembly of the mouse.</title>
        <authorList>
            <person name="Church D.M."/>
            <person name="Goodstadt L."/>
            <person name="Hillier L.W."/>
            <person name="Zody M.C."/>
            <person name="Goldstein S."/>
            <person name="She X."/>
            <person name="Bult C.J."/>
            <person name="Agarwala R."/>
            <person name="Cherry J.L."/>
            <person name="DiCuccio M."/>
            <person name="Hlavina W."/>
            <person name="Kapustin Y."/>
            <person name="Meric P."/>
            <person name="Maglott D."/>
            <person name="Birtle Z."/>
            <person name="Marques A.C."/>
            <person name="Graves T."/>
            <person name="Zhou S."/>
            <person name="Teague B."/>
            <person name="Potamousis K."/>
            <person name="Churas C."/>
            <person name="Place M."/>
            <person name="Herschleb J."/>
            <person name="Runnheim R."/>
            <person name="Forrest D."/>
            <person name="Amos-Landgraf J."/>
            <person name="Schwartz D.C."/>
            <person name="Cheng Z."/>
            <person name="Lindblad-Toh K."/>
            <person name="Eichler E.E."/>
            <person name="Ponting C.P."/>
        </authorList>
    </citation>
    <scope>NUCLEOTIDE SEQUENCE [LARGE SCALE GENOMIC DNA]</scope>
    <source>
        <strain>C57BL/6J</strain>
    </source>
</reference>
<reference key="2">
    <citation type="journal article" date="2010" name="Cell">
        <title>A tissue-specific atlas of mouse protein phosphorylation and expression.</title>
        <authorList>
            <person name="Huttlin E.L."/>
            <person name="Jedrychowski M.P."/>
            <person name="Elias J.E."/>
            <person name="Goswami T."/>
            <person name="Rad R."/>
            <person name="Beausoleil S.A."/>
            <person name="Villen J."/>
            <person name="Haas W."/>
            <person name="Sowa M.E."/>
            <person name="Gygi S.P."/>
        </authorList>
    </citation>
    <scope>IDENTIFICATION BY MASS SPECTROMETRY [LARGE SCALE ANALYSIS]</scope>
    <source>
        <tissue>Liver</tissue>
    </source>
</reference>
<organism>
    <name type="scientific">Mus musculus</name>
    <name type="common">Mouse</name>
    <dbReference type="NCBI Taxonomy" id="10090"/>
    <lineage>
        <taxon>Eukaryota</taxon>
        <taxon>Metazoa</taxon>
        <taxon>Chordata</taxon>
        <taxon>Craniata</taxon>
        <taxon>Vertebrata</taxon>
        <taxon>Euteleostomi</taxon>
        <taxon>Mammalia</taxon>
        <taxon>Eutheria</taxon>
        <taxon>Euarchontoglires</taxon>
        <taxon>Glires</taxon>
        <taxon>Rodentia</taxon>
        <taxon>Myomorpha</taxon>
        <taxon>Muroidea</taxon>
        <taxon>Muridae</taxon>
        <taxon>Murinae</taxon>
        <taxon>Mus</taxon>
        <taxon>Mus</taxon>
    </lineage>
</organism>
<name>GIMD1_MOUSE</name>
<proteinExistence type="evidence at protein level"/>
<gene>
    <name type="primary">Gimd1</name>
    <name type="synonym">Gm5549</name>
</gene>
<protein>
    <recommendedName>
        <fullName>GTPase IMAP family member GIMD1</fullName>
    </recommendedName>
    <alternativeName>
        <fullName>GIMAP family P-loop NTPase domain-containing protein 1</fullName>
    </alternativeName>
</protein>
<evidence type="ECO:0000250" key="1"/>
<evidence type="ECO:0000255" key="2">
    <source>
        <dbReference type="PROSITE-ProRule" id="PRU01057"/>
    </source>
</evidence>
<evidence type="ECO:0000305" key="3"/>
<feature type="chain" id="PRO_0000419200" description="GTPase IMAP family member GIMD1">
    <location>
        <begin position="1"/>
        <end position="217"/>
    </location>
</feature>
<feature type="domain" description="AIG1-type G" evidence="2">
    <location>
        <begin position="6"/>
        <end position="217"/>
    </location>
</feature>
<feature type="binding site" evidence="1">
    <location>
        <begin position="15"/>
        <end position="23"/>
    </location>
    <ligand>
        <name>GTP</name>
        <dbReference type="ChEBI" id="CHEBI:37565"/>
    </ligand>
</feature>
<feature type="binding site" evidence="1">
    <location>
        <position position="36"/>
    </location>
    <ligand>
        <name>GTP</name>
        <dbReference type="ChEBI" id="CHEBI:37565"/>
    </ligand>
</feature>
<feature type="binding site" evidence="1">
    <location>
        <begin position="148"/>
        <end position="150"/>
    </location>
    <ligand>
        <name>GTP</name>
        <dbReference type="ChEBI" id="CHEBI:37565"/>
    </ligand>
</feature>
<keyword id="KW-0342">GTP-binding</keyword>
<keyword id="KW-0547">Nucleotide-binding</keyword>
<keyword id="KW-1185">Reference proteome</keyword>
<sequence>MTDTNKMIINLAVFGRTQSGKSSAGNVLLGSADFYSSFAPGSVTKECSLGRSCHLHGFMRRGGQEISLQIQVLDTPGYPHSKLSTRCVKQEVKKALLHHFGQEGLHLALLVQRADVPFFGQEASNAVQLMQELLGDSCKNYMAVLFTHAEELEEAGLSEEEYLREASDTLLTLLDSVQHRYIFLSGRGNLCNEQRIKILERIMEFIKENHFQVLSLA</sequence>
<accession>E9PW74</accession>
<dbReference type="EMBL" id="AC122851">
    <property type="status" value="NOT_ANNOTATED_CDS"/>
    <property type="molecule type" value="Genomic_DNA"/>
</dbReference>
<dbReference type="CCDS" id="CCDS57257.1"/>
<dbReference type="RefSeq" id="NP_001257359.1">
    <property type="nucleotide sequence ID" value="NM_001270430.2"/>
</dbReference>
<dbReference type="RefSeq" id="NP_001359069.1">
    <property type="nucleotide sequence ID" value="NM_001372140.1"/>
</dbReference>
<dbReference type="RefSeq" id="NP_001359070.1">
    <property type="nucleotide sequence ID" value="NM_001372141.1"/>
</dbReference>
<dbReference type="RefSeq" id="XP_006501712.2">
    <property type="nucleotide sequence ID" value="XM_006501649.2"/>
</dbReference>
<dbReference type="SMR" id="E9PW74"/>
<dbReference type="STRING" id="10090.ENSMUSP00000148832"/>
<dbReference type="PhosphoSitePlus" id="E9PW74"/>
<dbReference type="PaxDb" id="10090-ENSMUSP00000126832"/>
<dbReference type="PeptideAtlas" id="E9PW74"/>
<dbReference type="ProteomicsDB" id="271223"/>
<dbReference type="Ensembl" id="ENSMUST00000163241.4">
    <property type="protein sequence ID" value="ENSMUSP00000126832.2"/>
    <property type="gene ID" value="ENSMUSG00000091721.5"/>
</dbReference>
<dbReference type="Ensembl" id="ENSMUST00000196701.2">
    <property type="protein sequence ID" value="ENSMUSP00000142630.2"/>
    <property type="gene ID" value="ENSMUSG00000091721.5"/>
</dbReference>
<dbReference type="Ensembl" id="ENSMUST00000212594.2">
    <property type="protein sequence ID" value="ENSMUSP00000148464.2"/>
    <property type="gene ID" value="ENSMUSG00000091721.5"/>
</dbReference>
<dbReference type="Ensembl" id="ENSMUST00000212804.2">
    <property type="protein sequence ID" value="ENSMUSP00000148832.2"/>
    <property type="gene ID" value="ENSMUSG00000091721.5"/>
</dbReference>
<dbReference type="GeneID" id="433653"/>
<dbReference type="KEGG" id="mmu:433653"/>
<dbReference type="UCSC" id="uc033hzy.1">
    <property type="organism name" value="mouse"/>
</dbReference>
<dbReference type="AGR" id="MGI:3647547"/>
<dbReference type="CTD" id="100507096"/>
<dbReference type="MGI" id="MGI:3647547">
    <property type="gene designation" value="Gimd1"/>
</dbReference>
<dbReference type="VEuPathDB" id="HostDB:ENSMUSG00000091721"/>
<dbReference type="eggNOG" id="ENOG502S1B7">
    <property type="taxonomic scope" value="Eukaryota"/>
</dbReference>
<dbReference type="GeneTree" id="ENSGT00530000069080"/>
<dbReference type="HOGENOM" id="CLU_010468_3_3_1"/>
<dbReference type="InParanoid" id="E9PW74"/>
<dbReference type="OMA" id="GKAMTDP"/>
<dbReference type="OrthoDB" id="8954335at2759"/>
<dbReference type="PhylomeDB" id="E9PW74"/>
<dbReference type="BioGRID-ORCS" id="433653">
    <property type="hits" value="1 hit in 37 CRISPR screens"/>
</dbReference>
<dbReference type="PRO" id="PR:E9PW74"/>
<dbReference type="Proteomes" id="UP000000589">
    <property type="component" value="Chromosome 3"/>
</dbReference>
<dbReference type="RNAct" id="E9PW74">
    <property type="molecule type" value="protein"/>
</dbReference>
<dbReference type="Bgee" id="ENSMUSG00000091721">
    <property type="expression patterns" value="Expressed in duodenum and 16 other cell types or tissues"/>
</dbReference>
<dbReference type="ExpressionAtlas" id="E9PW74">
    <property type="expression patterns" value="baseline and differential"/>
</dbReference>
<dbReference type="GO" id="GO:0005525">
    <property type="term" value="F:GTP binding"/>
    <property type="evidence" value="ECO:0007669"/>
    <property type="project" value="UniProtKB-KW"/>
</dbReference>
<dbReference type="FunFam" id="3.40.50.300:FF:001392">
    <property type="entry name" value="GTPase IMAP family member GIMD1"/>
    <property type="match status" value="1"/>
</dbReference>
<dbReference type="Gene3D" id="3.40.50.300">
    <property type="entry name" value="P-loop containing nucleotide triphosphate hydrolases"/>
    <property type="match status" value="1"/>
</dbReference>
<dbReference type="InterPro" id="IPR006703">
    <property type="entry name" value="G_AIG1"/>
</dbReference>
<dbReference type="InterPro" id="IPR045058">
    <property type="entry name" value="GIMA/IAN/Toc"/>
</dbReference>
<dbReference type="InterPro" id="IPR027417">
    <property type="entry name" value="P-loop_NTPase"/>
</dbReference>
<dbReference type="PANTHER" id="PTHR10903:SF103">
    <property type="entry name" value="GTPASE IMAP FAMILY MEMBER GIMD1"/>
    <property type="match status" value="1"/>
</dbReference>
<dbReference type="PANTHER" id="PTHR10903">
    <property type="entry name" value="GTPASE, IMAP FAMILY MEMBER-RELATED"/>
    <property type="match status" value="1"/>
</dbReference>
<dbReference type="Pfam" id="PF04548">
    <property type="entry name" value="AIG1"/>
    <property type="match status" value="1"/>
</dbReference>
<dbReference type="SUPFAM" id="SSF52540">
    <property type="entry name" value="P-loop containing nucleoside triphosphate hydrolases"/>
    <property type="match status" value="1"/>
</dbReference>
<dbReference type="PROSITE" id="PS51720">
    <property type="entry name" value="G_AIG1"/>
    <property type="match status" value="1"/>
</dbReference>